<reference key="1">
    <citation type="submission" date="2007-02" db="EMBL/GenBank/DDBJ databases">
        <title>Complete sequence of chromosome 1 of Rhodobacter sphaeroides ATCC 17029.</title>
        <authorList>
            <person name="Copeland A."/>
            <person name="Lucas S."/>
            <person name="Lapidus A."/>
            <person name="Barry K."/>
            <person name="Detter J.C."/>
            <person name="Glavina del Rio T."/>
            <person name="Hammon N."/>
            <person name="Israni S."/>
            <person name="Dalin E."/>
            <person name="Tice H."/>
            <person name="Pitluck S."/>
            <person name="Kiss H."/>
            <person name="Brettin T."/>
            <person name="Bruce D."/>
            <person name="Han C."/>
            <person name="Tapia R."/>
            <person name="Gilna P."/>
            <person name="Schmutz J."/>
            <person name="Larimer F."/>
            <person name="Land M."/>
            <person name="Hauser L."/>
            <person name="Kyrpides N."/>
            <person name="Mikhailova N."/>
            <person name="Richardson P."/>
            <person name="Mackenzie C."/>
            <person name="Choudhary M."/>
            <person name="Donohue T.J."/>
            <person name="Kaplan S."/>
        </authorList>
    </citation>
    <scope>NUCLEOTIDE SEQUENCE [LARGE SCALE GENOMIC DNA]</scope>
    <source>
        <strain>ATCC 17029 / ATH 2.4.9</strain>
    </source>
</reference>
<dbReference type="EC" id="2.7.7.8" evidence="1"/>
<dbReference type="EMBL" id="CP000577">
    <property type="protein sequence ID" value="ABN77876.1"/>
    <property type="molecule type" value="Genomic_DNA"/>
</dbReference>
<dbReference type="RefSeq" id="WP_002721512.1">
    <property type="nucleotide sequence ID" value="NC_009049.1"/>
</dbReference>
<dbReference type="SMR" id="A3PNG0"/>
<dbReference type="GeneID" id="3720696"/>
<dbReference type="KEGG" id="rsh:Rsph17029_2774"/>
<dbReference type="HOGENOM" id="CLU_004217_2_2_5"/>
<dbReference type="GO" id="GO:0005829">
    <property type="term" value="C:cytosol"/>
    <property type="evidence" value="ECO:0007669"/>
    <property type="project" value="TreeGrafter"/>
</dbReference>
<dbReference type="GO" id="GO:0000175">
    <property type="term" value="F:3'-5'-RNA exonuclease activity"/>
    <property type="evidence" value="ECO:0007669"/>
    <property type="project" value="TreeGrafter"/>
</dbReference>
<dbReference type="GO" id="GO:0000287">
    <property type="term" value="F:magnesium ion binding"/>
    <property type="evidence" value="ECO:0007669"/>
    <property type="project" value="UniProtKB-UniRule"/>
</dbReference>
<dbReference type="GO" id="GO:0004654">
    <property type="term" value="F:polyribonucleotide nucleotidyltransferase activity"/>
    <property type="evidence" value="ECO:0007669"/>
    <property type="project" value="UniProtKB-UniRule"/>
</dbReference>
<dbReference type="GO" id="GO:0003723">
    <property type="term" value="F:RNA binding"/>
    <property type="evidence" value="ECO:0007669"/>
    <property type="project" value="UniProtKB-UniRule"/>
</dbReference>
<dbReference type="GO" id="GO:0006402">
    <property type="term" value="P:mRNA catabolic process"/>
    <property type="evidence" value="ECO:0007669"/>
    <property type="project" value="UniProtKB-UniRule"/>
</dbReference>
<dbReference type="GO" id="GO:0006396">
    <property type="term" value="P:RNA processing"/>
    <property type="evidence" value="ECO:0007669"/>
    <property type="project" value="InterPro"/>
</dbReference>
<dbReference type="CDD" id="cd02393">
    <property type="entry name" value="KH-I_PNPase"/>
    <property type="match status" value="1"/>
</dbReference>
<dbReference type="CDD" id="cd11363">
    <property type="entry name" value="RNase_PH_PNPase_1"/>
    <property type="match status" value="1"/>
</dbReference>
<dbReference type="CDD" id="cd11364">
    <property type="entry name" value="RNase_PH_PNPase_2"/>
    <property type="match status" value="1"/>
</dbReference>
<dbReference type="CDD" id="cd04472">
    <property type="entry name" value="S1_PNPase"/>
    <property type="match status" value="1"/>
</dbReference>
<dbReference type="FunFam" id="2.40.50.140:FF:000107">
    <property type="entry name" value="Polyribonucleotide nucleotidyltransferase"/>
    <property type="match status" value="1"/>
</dbReference>
<dbReference type="FunFam" id="3.30.1370.10:FF:000001">
    <property type="entry name" value="Polyribonucleotide nucleotidyltransferase"/>
    <property type="match status" value="1"/>
</dbReference>
<dbReference type="FunFam" id="3.30.230.70:FF:000001">
    <property type="entry name" value="Polyribonucleotide nucleotidyltransferase"/>
    <property type="match status" value="1"/>
</dbReference>
<dbReference type="FunFam" id="3.30.230.70:FF:000002">
    <property type="entry name" value="Polyribonucleotide nucleotidyltransferase"/>
    <property type="match status" value="1"/>
</dbReference>
<dbReference type="Gene3D" id="3.30.230.70">
    <property type="entry name" value="GHMP Kinase, N-terminal domain"/>
    <property type="match status" value="2"/>
</dbReference>
<dbReference type="Gene3D" id="3.30.1370.10">
    <property type="entry name" value="K Homology domain, type 1"/>
    <property type="match status" value="1"/>
</dbReference>
<dbReference type="Gene3D" id="2.40.50.140">
    <property type="entry name" value="Nucleic acid-binding proteins"/>
    <property type="match status" value="1"/>
</dbReference>
<dbReference type="HAMAP" id="MF_01595">
    <property type="entry name" value="PNPase"/>
    <property type="match status" value="1"/>
</dbReference>
<dbReference type="InterPro" id="IPR001247">
    <property type="entry name" value="ExoRNase_PH_dom1"/>
</dbReference>
<dbReference type="InterPro" id="IPR015847">
    <property type="entry name" value="ExoRNase_PH_dom2"/>
</dbReference>
<dbReference type="InterPro" id="IPR036345">
    <property type="entry name" value="ExoRNase_PH_dom2_sf"/>
</dbReference>
<dbReference type="InterPro" id="IPR004087">
    <property type="entry name" value="KH_dom"/>
</dbReference>
<dbReference type="InterPro" id="IPR004088">
    <property type="entry name" value="KH_dom_type_1"/>
</dbReference>
<dbReference type="InterPro" id="IPR036612">
    <property type="entry name" value="KH_dom_type_1_sf"/>
</dbReference>
<dbReference type="InterPro" id="IPR012340">
    <property type="entry name" value="NA-bd_OB-fold"/>
</dbReference>
<dbReference type="InterPro" id="IPR012162">
    <property type="entry name" value="PNPase"/>
</dbReference>
<dbReference type="InterPro" id="IPR027408">
    <property type="entry name" value="PNPase/RNase_PH_dom_sf"/>
</dbReference>
<dbReference type="InterPro" id="IPR015848">
    <property type="entry name" value="PNPase_PH_RNA-bd_bac/org-type"/>
</dbReference>
<dbReference type="InterPro" id="IPR036456">
    <property type="entry name" value="PNPase_PH_RNA-bd_sf"/>
</dbReference>
<dbReference type="InterPro" id="IPR020568">
    <property type="entry name" value="Ribosomal_Su5_D2-typ_SF"/>
</dbReference>
<dbReference type="InterPro" id="IPR003029">
    <property type="entry name" value="S1_domain"/>
</dbReference>
<dbReference type="NCBIfam" id="TIGR03591">
    <property type="entry name" value="polynuc_phos"/>
    <property type="match status" value="1"/>
</dbReference>
<dbReference type="NCBIfam" id="NF008805">
    <property type="entry name" value="PRK11824.1"/>
    <property type="match status" value="1"/>
</dbReference>
<dbReference type="PANTHER" id="PTHR11252">
    <property type="entry name" value="POLYRIBONUCLEOTIDE NUCLEOTIDYLTRANSFERASE"/>
    <property type="match status" value="1"/>
</dbReference>
<dbReference type="PANTHER" id="PTHR11252:SF0">
    <property type="entry name" value="POLYRIBONUCLEOTIDE NUCLEOTIDYLTRANSFERASE 1, MITOCHONDRIAL"/>
    <property type="match status" value="1"/>
</dbReference>
<dbReference type="Pfam" id="PF00013">
    <property type="entry name" value="KH_1"/>
    <property type="match status" value="1"/>
</dbReference>
<dbReference type="Pfam" id="PF03726">
    <property type="entry name" value="PNPase"/>
    <property type="match status" value="1"/>
</dbReference>
<dbReference type="Pfam" id="PF01138">
    <property type="entry name" value="RNase_PH"/>
    <property type="match status" value="2"/>
</dbReference>
<dbReference type="Pfam" id="PF03725">
    <property type="entry name" value="RNase_PH_C"/>
    <property type="match status" value="2"/>
</dbReference>
<dbReference type="Pfam" id="PF00575">
    <property type="entry name" value="S1"/>
    <property type="match status" value="1"/>
</dbReference>
<dbReference type="PIRSF" id="PIRSF005499">
    <property type="entry name" value="PNPase"/>
    <property type="match status" value="1"/>
</dbReference>
<dbReference type="SMART" id="SM00322">
    <property type="entry name" value="KH"/>
    <property type="match status" value="1"/>
</dbReference>
<dbReference type="SMART" id="SM00316">
    <property type="entry name" value="S1"/>
    <property type="match status" value="1"/>
</dbReference>
<dbReference type="SUPFAM" id="SSF54791">
    <property type="entry name" value="Eukaryotic type KH-domain (KH-domain type I)"/>
    <property type="match status" value="1"/>
</dbReference>
<dbReference type="SUPFAM" id="SSF50249">
    <property type="entry name" value="Nucleic acid-binding proteins"/>
    <property type="match status" value="1"/>
</dbReference>
<dbReference type="SUPFAM" id="SSF46915">
    <property type="entry name" value="Polynucleotide phosphorylase/guanosine pentaphosphate synthase (PNPase/GPSI), domain 3"/>
    <property type="match status" value="1"/>
</dbReference>
<dbReference type="SUPFAM" id="SSF55666">
    <property type="entry name" value="Ribonuclease PH domain 2-like"/>
    <property type="match status" value="2"/>
</dbReference>
<dbReference type="SUPFAM" id="SSF54211">
    <property type="entry name" value="Ribosomal protein S5 domain 2-like"/>
    <property type="match status" value="2"/>
</dbReference>
<dbReference type="PROSITE" id="PS50084">
    <property type="entry name" value="KH_TYPE_1"/>
    <property type="match status" value="1"/>
</dbReference>
<dbReference type="PROSITE" id="PS50126">
    <property type="entry name" value="S1"/>
    <property type="match status" value="1"/>
</dbReference>
<accession>A3PNG0</accession>
<organism>
    <name type="scientific">Cereibacter sphaeroides (strain ATCC 17029 / ATH 2.4.9)</name>
    <name type="common">Rhodobacter sphaeroides</name>
    <dbReference type="NCBI Taxonomy" id="349101"/>
    <lineage>
        <taxon>Bacteria</taxon>
        <taxon>Pseudomonadati</taxon>
        <taxon>Pseudomonadota</taxon>
        <taxon>Alphaproteobacteria</taxon>
        <taxon>Rhodobacterales</taxon>
        <taxon>Paracoccaceae</taxon>
        <taxon>Cereibacter</taxon>
    </lineage>
</organism>
<name>PNP_CERS1</name>
<evidence type="ECO:0000255" key="1">
    <source>
        <dbReference type="HAMAP-Rule" id="MF_01595"/>
    </source>
</evidence>
<evidence type="ECO:0000256" key="2">
    <source>
        <dbReference type="SAM" id="MobiDB-lite"/>
    </source>
</evidence>
<keyword id="KW-0963">Cytoplasm</keyword>
<keyword id="KW-0460">Magnesium</keyword>
<keyword id="KW-0479">Metal-binding</keyword>
<keyword id="KW-0548">Nucleotidyltransferase</keyword>
<keyword id="KW-0694">RNA-binding</keyword>
<keyword id="KW-0808">Transferase</keyword>
<proteinExistence type="inferred from homology"/>
<sequence length="716" mass="77414">MFNVTKKSIEWGGETLTLETGKVARQADGSVIATLGETSVMANVTFAKAAKPGQDFFPLTVHYQERYYAAGKVPGGFFKREARPSEKETLTSRLIDRPIRPLFVDGFKNEVLLIVTVLSHDLVNEPDIVAMIAASAALTISGVPFMGPIGAARVGFAGGEYVLNPDVDDMQKLRENPEQRLDLVIAGTKDAVMMVESEAYELSEAEMLGAVKFGHEAMQPVIDMIIDFAEEAAHEPFDFSPPDYAALYAKVKSLGETQMRAAFAIREKQDRVNAIDAARAAIKAQLSEAELADENLGTAFKKLESSILRGDIINGGARIDGRDTKTVRPIISETSVLPRTHGSALFTRGETQALVVTTLGTGEDEQIIDALHGNSRSNFLLHYNFPPYSVGEVGRFGPPGRREIGHGKLAWRALQAVLPAATDFPYTIRVVSEITESNGSSSMASVCGGSLSMMDAGVPLKAPVAGVAMGLILEDDGKWAVLTDILGDEDHLGDMDFKVAGTENGITSLQMDIKVAGITPEIMEQALAQAKDGRMHILGEMSKALSSANSFSAYAPKIETLTIPTDKIREVIGSGGKVIREIVETSGAKVDINDDGVIKIASNDQAAIKKAYDMIWSIVAEPEEGQIYTGKVVKLVDFGAFVNFFGKRDGLVHVSQIANKRLTHPNEVLKEGQEVKVKLLGFDERGKVRLGMKMVDQETGQEIQPEKKEKEEAGEA</sequence>
<gene>
    <name evidence="1" type="primary">pnp</name>
    <name type="ordered locus">Rsph17029_2774</name>
</gene>
<comment type="function">
    <text evidence="1">Involved in mRNA degradation. Catalyzes the phosphorolysis of single-stranded polyribonucleotides processively in the 3'- to 5'-direction.</text>
</comment>
<comment type="catalytic activity">
    <reaction evidence="1">
        <text>RNA(n+1) + phosphate = RNA(n) + a ribonucleoside 5'-diphosphate</text>
        <dbReference type="Rhea" id="RHEA:22096"/>
        <dbReference type="Rhea" id="RHEA-COMP:14527"/>
        <dbReference type="Rhea" id="RHEA-COMP:17342"/>
        <dbReference type="ChEBI" id="CHEBI:43474"/>
        <dbReference type="ChEBI" id="CHEBI:57930"/>
        <dbReference type="ChEBI" id="CHEBI:140395"/>
        <dbReference type="EC" id="2.7.7.8"/>
    </reaction>
</comment>
<comment type="cofactor">
    <cofactor evidence="1">
        <name>Mg(2+)</name>
        <dbReference type="ChEBI" id="CHEBI:18420"/>
    </cofactor>
</comment>
<comment type="subcellular location">
    <subcellularLocation>
        <location evidence="1">Cytoplasm</location>
    </subcellularLocation>
</comment>
<comment type="similarity">
    <text evidence="1">Belongs to the polyribonucleotide nucleotidyltransferase family.</text>
</comment>
<feature type="chain" id="PRO_0000329805" description="Polyribonucleotide nucleotidyltransferase">
    <location>
        <begin position="1"/>
        <end position="716"/>
    </location>
</feature>
<feature type="domain" description="KH" evidence="1">
    <location>
        <begin position="556"/>
        <end position="615"/>
    </location>
</feature>
<feature type="domain" description="S1 motif" evidence="1">
    <location>
        <begin position="625"/>
        <end position="693"/>
    </location>
</feature>
<feature type="region of interest" description="Disordered" evidence="2">
    <location>
        <begin position="695"/>
        <end position="716"/>
    </location>
</feature>
<feature type="compositionally biased region" description="Basic and acidic residues" evidence="2">
    <location>
        <begin position="704"/>
        <end position="716"/>
    </location>
</feature>
<feature type="binding site" evidence="1">
    <location>
        <position position="490"/>
    </location>
    <ligand>
        <name>Mg(2+)</name>
        <dbReference type="ChEBI" id="CHEBI:18420"/>
    </ligand>
</feature>
<feature type="binding site" evidence="1">
    <location>
        <position position="496"/>
    </location>
    <ligand>
        <name>Mg(2+)</name>
        <dbReference type="ChEBI" id="CHEBI:18420"/>
    </ligand>
</feature>
<protein>
    <recommendedName>
        <fullName evidence="1">Polyribonucleotide nucleotidyltransferase</fullName>
        <ecNumber evidence="1">2.7.7.8</ecNumber>
    </recommendedName>
    <alternativeName>
        <fullName evidence="1">Polynucleotide phosphorylase</fullName>
        <shortName evidence="1">PNPase</shortName>
    </alternativeName>
</protein>